<proteinExistence type="inferred from homology"/>
<accession>A0M3Z1</accession>
<dbReference type="EMBL" id="CU207366">
    <property type="protein sequence ID" value="CAL67336.1"/>
    <property type="molecule type" value="Genomic_DNA"/>
</dbReference>
<dbReference type="RefSeq" id="WP_011710239.1">
    <property type="nucleotide sequence ID" value="NC_008571.1"/>
</dbReference>
<dbReference type="SMR" id="A0M3Z1"/>
<dbReference type="STRING" id="411154.GFO_2372"/>
<dbReference type="KEGG" id="gfo:GFO_2372"/>
<dbReference type="eggNOG" id="COG0244">
    <property type="taxonomic scope" value="Bacteria"/>
</dbReference>
<dbReference type="HOGENOM" id="CLU_092227_3_0_10"/>
<dbReference type="OrthoDB" id="1523686at2"/>
<dbReference type="Proteomes" id="UP000000755">
    <property type="component" value="Chromosome"/>
</dbReference>
<dbReference type="GO" id="GO:1990904">
    <property type="term" value="C:ribonucleoprotein complex"/>
    <property type="evidence" value="ECO:0007669"/>
    <property type="project" value="UniProtKB-KW"/>
</dbReference>
<dbReference type="GO" id="GO:0005840">
    <property type="term" value="C:ribosome"/>
    <property type="evidence" value="ECO:0007669"/>
    <property type="project" value="UniProtKB-KW"/>
</dbReference>
<dbReference type="GO" id="GO:0070180">
    <property type="term" value="F:large ribosomal subunit rRNA binding"/>
    <property type="evidence" value="ECO:0007669"/>
    <property type="project" value="UniProtKB-UniRule"/>
</dbReference>
<dbReference type="GO" id="GO:0006412">
    <property type="term" value="P:translation"/>
    <property type="evidence" value="ECO:0007669"/>
    <property type="project" value="UniProtKB-UniRule"/>
</dbReference>
<dbReference type="CDD" id="cd05797">
    <property type="entry name" value="Ribosomal_L10"/>
    <property type="match status" value="1"/>
</dbReference>
<dbReference type="Gene3D" id="3.30.70.1730">
    <property type="match status" value="1"/>
</dbReference>
<dbReference type="Gene3D" id="6.10.250.290">
    <property type="match status" value="1"/>
</dbReference>
<dbReference type="HAMAP" id="MF_00362">
    <property type="entry name" value="Ribosomal_uL10"/>
    <property type="match status" value="1"/>
</dbReference>
<dbReference type="InterPro" id="IPR001790">
    <property type="entry name" value="Ribosomal_uL10"/>
</dbReference>
<dbReference type="InterPro" id="IPR043141">
    <property type="entry name" value="Ribosomal_uL10-like_sf"/>
</dbReference>
<dbReference type="InterPro" id="IPR022973">
    <property type="entry name" value="Ribosomal_uL10_bac"/>
</dbReference>
<dbReference type="InterPro" id="IPR047865">
    <property type="entry name" value="Ribosomal_uL10_bac_type"/>
</dbReference>
<dbReference type="NCBIfam" id="NF000955">
    <property type="entry name" value="PRK00099.1-1"/>
    <property type="match status" value="1"/>
</dbReference>
<dbReference type="PANTHER" id="PTHR11560">
    <property type="entry name" value="39S RIBOSOMAL PROTEIN L10, MITOCHONDRIAL"/>
    <property type="match status" value="1"/>
</dbReference>
<dbReference type="Pfam" id="PF00466">
    <property type="entry name" value="Ribosomal_L10"/>
    <property type="match status" value="1"/>
</dbReference>
<dbReference type="SUPFAM" id="SSF160369">
    <property type="entry name" value="Ribosomal protein L10-like"/>
    <property type="match status" value="1"/>
</dbReference>
<organism>
    <name type="scientific">Christiangramia forsetii (strain DSM 17595 / CGMCC 1.15422 / KT0803)</name>
    <name type="common">Gramella forsetii</name>
    <dbReference type="NCBI Taxonomy" id="411154"/>
    <lineage>
        <taxon>Bacteria</taxon>
        <taxon>Pseudomonadati</taxon>
        <taxon>Bacteroidota</taxon>
        <taxon>Flavobacteriia</taxon>
        <taxon>Flavobacteriales</taxon>
        <taxon>Flavobacteriaceae</taxon>
        <taxon>Christiangramia</taxon>
    </lineage>
</organism>
<comment type="function">
    <text evidence="1">Forms part of the ribosomal stalk, playing a central role in the interaction of the ribosome with GTP-bound translation factors.</text>
</comment>
<comment type="subunit">
    <text evidence="1">Part of the ribosomal stalk of the 50S ribosomal subunit. The N-terminus interacts with L11 and the large rRNA to form the base of the stalk. The C-terminus forms an elongated spine to which L12 dimers bind in a sequential fashion forming a multimeric L10(L12)X complex.</text>
</comment>
<comment type="similarity">
    <text evidence="1">Belongs to the universal ribosomal protein uL10 family.</text>
</comment>
<reference key="1">
    <citation type="journal article" date="2006" name="Environ. Microbiol.">
        <title>Whole genome analysis of the marine Bacteroidetes'Gramella forsetii' reveals adaptations to degradation of polymeric organic matter.</title>
        <authorList>
            <person name="Bauer M."/>
            <person name="Kube M."/>
            <person name="Teeling H."/>
            <person name="Richter M."/>
            <person name="Lombardot T."/>
            <person name="Allers E."/>
            <person name="Wuerdemann C.A."/>
            <person name="Quast C."/>
            <person name="Kuhl H."/>
            <person name="Knaust F."/>
            <person name="Woebken D."/>
            <person name="Bischof K."/>
            <person name="Mussmann M."/>
            <person name="Choudhuri J.V."/>
            <person name="Meyer F."/>
            <person name="Reinhardt R."/>
            <person name="Amann R.I."/>
            <person name="Gloeckner F.O."/>
        </authorList>
    </citation>
    <scope>NUCLEOTIDE SEQUENCE [LARGE SCALE GENOMIC DNA]</scope>
    <source>
        <strain>DSM 17595 / CGMCC 1.15422 / KT0803</strain>
    </source>
</reference>
<protein>
    <recommendedName>
        <fullName evidence="1">Large ribosomal subunit protein uL10</fullName>
    </recommendedName>
    <alternativeName>
        <fullName evidence="2">50S ribosomal protein L10</fullName>
    </alternativeName>
</protein>
<name>RL10_CHRFK</name>
<keyword id="KW-0687">Ribonucleoprotein</keyword>
<keyword id="KW-0689">Ribosomal protein</keyword>
<keyword id="KW-0694">RNA-binding</keyword>
<keyword id="KW-0699">rRNA-binding</keyword>
<sequence>MTREEKAQVIEALTAQLAENPTIYLADISGLDAGSTSNLRRACFKANVKLAVVKNTLLAKAMEAAEKDFGELPTVLKGNTSIMLSETGNAPAKVIKEFRKKSEKPLLKGAFVEEAIYVGDDYLDTLVNIKSKEEVIGDIVGLLQSPAKNVVSALKSGGGKIAGILKTLSEKEG</sequence>
<evidence type="ECO:0000255" key="1">
    <source>
        <dbReference type="HAMAP-Rule" id="MF_00362"/>
    </source>
</evidence>
<evidence type="ECO:0000305" key="2"/>
<gene>
    <name evidence="1" type="primary">rplJ</name>
    <name type="ordered locus">GFO_2372</name>
</gene>
<feature type="chain" id="PRO_1000120970" description="Large ribosomal subunit protein uL10">
    <location>
        <begin position="1"/>
        <end position="173"/>
    </location>
</feature>